<dbReference type="EMBL" id="CM003158">
    <property type="protein sequence ID" value="KIS66435.1"/>
    <property type="molecule type" value="Genomic_DNA"/>
</dbReference>
<dbReference type="RefSeq" id="XP_011392115.1">
    <property type="nucleotide sequence ID" value="XM_011393813.1"/>
</dbReference>
<dbReference type="STRING" id="237631.Q4P384"/>
<dbReference type="EnsemblFungi" id="KIS66435">
    <property type="protein sequence ID" value="KIS66435"/>
    <property type="gene ID" value="UMAG_05429"/>
</dbReference>
<dbReference type="GeneID" id="23565329"/>
<dbReference type="KEGG" id="uma:UMAG_05429"/>
<dbReference type="VEuPathDB" id="FungiDB:UMAG_05429"/>
<dbReference type="eggNOG" id="KOG1040">
    <property type="taxonomic scope" value="Eukaryota"/>
</dbReference>
<dbReference type="HOGENOM" id="CLU_024513_0_0_1"/>
<dbReference type="InParanoid" id="Q4P384"/>
<dbReference type="OMA" id="EEVTCFK"/>
<dbReference type="OrthoDB" id="1914176at2759"/>
<dbReference type="Proteomes" id="UP000000561">
    <property type="component" value="Chromosome 19"/>
</dbReference>
<dbReference type="GO" id="GO:0005634">
    <property type="term" value="C:nucleus"/>
    <property type="evidence" value="ECO:0007669"/>
    <property type="project" value="UniProtKB-SubCell"/>
</dbReference>
<dbReference type="GO" id="GO:0003723">
    <property type="term" value="F:RNA binding"/>
    <property type="evidence" value="ECO:0007669"/>
    <property type="project" value="UniProtKB-KW"/>
</dbReference>
<dbReference type="GO" id="GO:0008270">
    <property type="term" value="F:zinc ion binding"/>
    <property type="evidence" value="ECO:0007669"/>
    <property type="project" value="UniProtKB-KW"/>
</dbReference>
<dbReference type="GO" id="GO:0006397">
    <property type="term" value="P:mRNA processing"/>
    <property type="evidence" value="ECO:0007669"/>
    <property type="project" value="UniProtKB-KW"/>
</dbReference>
<dbReference type="FunFam" id="4.10.1000.10:FF:000012">
    <property type="entry name" value="cleavage and polyadenylation specificity factor subunit 4"/>
    <property type="match status" value="1"/>
</dbReference>
<dbReference type="Gene3D" id="4.10.1000.10">
    <property type="entry name" value="Zinc finger, CCCH-type"/>
    <property type="match status" value="2"/>
</dbReference>
<dbReference type="Gene3D" id="4.10.60.10">
    <property type="entry name" value="Zinc finger, CCHC-type"/>
    <property type="match status" value="1"/>
</dbReference>
<dbReference type="InterPro" id="IPR045348">
    <property type="entry name" value="CPSF4/Yth1"/>
</dbReference>
<dbReference type="InterPro" id="IPR000571">
    <property type="entry name" value="Znf_CCCH"/>
</dbReference>
<dbReference type="InterPro" id="IPR036855">
    <property type="entry name" value="Znf_CCCH_sf"/>
</dbReference>
<dbReference type="InterPro" id="IPR001878">
    <property type="entry name" value="Znf_CCHC"/>
</dbReference>
<dbReference type="InterPro" id="IPR036875">
    <property type="entry name" value="Znf_CCHC_sf"/>
</dbReference>
<dbReference type="PANTHER" id="PTHR23102:SF24">
    <property type="entry name" value="CLEAVAGE AND POLYADENYLATION SPECIFICITY FACTOR SUBUNIT 4"/>
    <property type="match status" value="1"/>
</dbReference>
<dbReference type="PANTHER" id="PTHR23102">
    <property type="entry name" value="CLEAVAGE AND POLYADENYLATION SPECIFICITY FACTOR SUBUNIT 4-RELATED"/>
    <property type="match status" value="1"/>
</dbReference>
<dbReference type="Pfam" id="PF00642">
    <property type="entry name" value="zf-CCCH"/>
    <property type="match status" value="1"/>
</dbReference>
<dbReference type="Pfam" id="PF00098">
    <property type="entry name" value="zf-CCHC"/>
    <property type="match status" value="1"/>
</dbReference>
<dbReference type="SMART" id="SM00343">
    <property type="entry name" value="ZnF_C2HC"/>
    <property type="match status" value="1"/>
</dbReference>
<dbReference type="SMART" id="SM00356">
    <property type="entry name" value="ZnF_C3H1"/>
    <property type="match status" value="5"/>
</dbReference>
<dbReference type="SUPFAM" id="SSF90229">
    <property type="entry name" value="CCCH zinc finger"/>
    <property type="match status" value="3"/>
</dbReference>
<dbReference type="SUPFAM" id="SSF57756">
    <property type="entry name" value="Retrovirus zinc finger-like domains"/>
    <property type="match status" value="1"/>
</dbReference>
<dbReference type="PROSITE" id="PS50103">
    <property type="entry name" value="ZF_C3H1"/>
    <property type="match status" value="5"/>
</dbReference>
<dbReference type="PROSITE" id="PS50158">
    <property type="entry name" value="ZF_CCHC"/>
    <property type="match status" value="1"/>
</dbReference>
<name>YTH1_MYCMD</name>
<comment type="function">
    <text evidence="1">Component of the cleavage factor I (CF I) involved in pre-mRNA 3'-end processing.</text>
</comment>
<comment type="subcellular location">
    <subcellularLocation>
        <location evidence="1">Nucleus</location>
    </subcellularLocation>
</comment>
<comment type="similarity">
    <text evidence="5">Belongs to the CPSF4/YTH1 family.</text>
</comment>
<gene>
    <name type="primary">YTH1</name>
    <name type="ORF">UMAG_05429</name>
</gene>
<protein>
    <recommendedName>
        <fullName>mRNA 3'-end-processing protein YTH1</fullName>
    </recommendedName>
</protein>
<feature type="chain" id="PRO_0000238543" description="mRNA 3'-end-processing protein YTH1">
    <location>
        <begin position="1"/>
        <end position="366"/>
    </location>
</feature>
<feature type="zinc finger region" description="C3H1-type 1" evidence="3">
    <location>
        <begin position="60"/>
        <end position="88"/>
    </location>
</feature>
<feature type="zinc finger region" description="C3H1-type 2" evidence="3">
    <location>
        <begin position="104"/>
        <end position="131"/>
    </location>
</feature>
<feature type="zinc finger region" description="C3H1-type 3" evidence="3">
    <location>
        <begin position="132"/>
        <end position="160"/>
    </location>
</feature>
<feature type="zinc finger region" description="C3H1-type 4" evidence="3">
    <location>
        <begin position="161"/>
        <end position="188"/>
    </location>
</feature>
<feature type="zinc finger region" description="C3H1-type 5" evidence="3">
    <location>
        <begin position="190"/>
        <end position="212"/>
    </location>
</feature>
<feature type="zinc finger region" description="CCHC-type" evidence="2">
    <location>
        <begin position="321"/>
        <end position="338"/>
    </location>
</feature>
<feature type="region of interest" description="Disordered" evidence="4">
    <location>
        <begin position="1"/>
        <end position="20"/>
    </location>
</feature>
<feature type="region of interest" description="Disordered" evidence="4">
    <location>
        <begin position="211"/>
        <end position="255"/>
    </location>
</feature>
<feature type="region of interest" description="Disordered" evidence="4">
    <location>
        <begin position="343"/>
        <end position="366"/>
    </location>
</feature>
<feature type="compositionally biased region" description="Low complexity" evidence="4">
    <location>
        <begin position="212"/>
        <end position="224"/>
    </location>
</feature>
<feature type="compositionally biased region" description="Gly residues" evidence="4">
    <location>
        <begin position="344"/>
        <end position="354"/>
    </location>
</feature>
<reference key="1">
    <citation type="journal article" date="2006" name="Nature">
        <title>Insights from the genome of the biotrophic fungal plant pathogen Ustilago maydis.</title>
        <authorList>
            <person name="Kaemper J."/>
            <person name="Kahmann R."/>
            <person name="Boelker M."/>
            <person name="Ma L.-J."/>
            <person name="Brefort T."/>
            <person name="Saville B.J."/>
            <person name="Banuett F."/>
            <person name="Kronstad J.W."/>
            <person name="Gold S.E."/>
            <person name="Mueller O."/>
            <person name="Perlin M.H."/>
            <person name="Woesten H.A.B."/>
            <person name="de Vries R."/>
            <person name="Ruiz-Herrera J."/>
            <person name="Reynaga-Pena C.G."/>
            <person name="Snetselaar K."/>
            <person name="McCann M."/>
            <person name="Perez-Martin J."/>
            <person name="Feldbruegge M."/>
            <person name="Basse C.W."/>
            <person name="Steinberg G."/>
            <person name="Ibeas J.I."/>
            <person name="Holloman W."/>
            <person name="Guzman P."/>
            <person name="Farman M.L."/>
            <person name="Stajich J.E."/>
            <person name="Sentandreu R."/>
            <person name="Gonzalez-Prieto J.M."/>
            <person name="Kennell J.C."/>
            <person name="Molina L."/>
            <person name="Schirawski J."/>
            <person name="Mendoza-Mendoza A."/>
            <person name="Greilinger D."/>
            <person name="Muench K."/>
            <person name="Roessel N."/>
            <person name="Scherer M."/>
            <person name="Vranes M."/>
            <person name="Ladendorf O."/>
            <person name="Vincon V."/>
            <person name="Fuchs U."/>
            <person name="Sandrock B."/>
            <person name="Meng S."/>
            <person name="Ho E.C.H."/>
            <person name="Cahill M.J."/>
            <person name="Boyce K.J."/>
            <person name="Klose J."/>
            <person name="Klosterman S.J."/>
            <person name="Deelstra H.J."/>
            <person name="Ortiz-Castellanos L."/>
            <person name="Li W."/>
            <person name="Sanchez-Alonso P."/>
            <person name="Schreier P.H."/>
            <person name="Haeuser-Hahn I."/>
            <person name="Vaupel M."/>
            <person name="Koopmann E."/>
            <person name="Friedrich G."/>
            <person name="Voss H."/>
            <person name="Schlueter T."/>
            <person name="Margolis J."/>
            <person name="Platt D."/>
            <person name="Swimmer C."/>
            <person name="Gnirke A."/>
            <person name="Chen F."/>
            <person name="Vysotskaia V."/>
            <person name="Mannhaupt G."/>
            <person name="Gueldener U."/>
            <person name="Muensterkoetter M."/>
            <person name="Haase D."/>
            <person name="Oesterheld M."/>
            <person name="Mewes H.-W."/>
            <person name="Mauceli E.W."/>
            <person name="DeCaprio D."/>
            <person name="Wade C.M."/>
            <person name="Butler J."/>
            <person name="Young S.K."/>
            <person name="Jaffe D.B."/>
            <person name="Calvo S.E."/>
            <person name="Nusbaum C."/>
            <person name="Galagan J.E."/>
            <person name="Birren B.W."/>
        </authorList>
    </citation>
    <scope>NUCLEOTIDE SEQUENCE [LARGE SCALE GENOMIC DNA]</scope>
    <source>
        <strain>DSM 14603 / FGSC 9021 / UM521</strain>
    </source>
</reference>
<reference key="2">
    <citation type="submission" date="2014-09" db="EMBL/GenBank/DDBJ databases">
        <authorList>
            <person name="Gueldener U."/>
            <person name="Muensterkoetter M."/>
            <person name="Walter M.C."/>
            <person name="Mannhaupt G."/>
            <person name="Kahmann R."/>
        </authorList>
    </citation>
    <scope>GENOME REANNOTATION</scope>
    <source>
        <strain>DSM 14603 / FGSC 9021 / UM521</strain>
    </source>
</reference>
<organism>
    <name type="scientific">Mycosarcoma maydis</name>
    <name type="common">Corn smut fungus</name>
    <name type="synonym">Ustilago maydis</name>
    <dbReference type="NCBI Taxonomy" id="5270"/>
    <lineage>
        <taxon>Eukaryota</taxon>
        <taxon>Fungi</taxon>
        <taxon>Dikarya</taxon>
        <taxon>Basidiomycota</taxon>
        <taxon>Ustilaginomycotina</taxon>
        <taxon>Ustilaginomycetes</taxon>
        <taxon>Ustilaginales</taxon>
        <taxon>Ustilaginaceae</taxon>
        <taxon>Mycosarcoma</taxon>
    </lineage>
</organism>
<proteinExistence type="inferred from homology"/>
<keyword id="KW-0479">Metal-binding</keyword>
<keyword id="KW-0507">mRNA processing</keyword>
<keyword id="KW-0539">Nucleus</keyword>
<keyword id="KW-1185">Reference proteome</keyword>
<keyword id="KW-0677">Repeat</keyword>
<keyword id="KW-0694">RNA-binding</keyword>
<keyword id="KW-0862">Zinc</keyword>
<keyword id="KW-0863">Zinc-finger</keyword>
<evidence type="ECO:0000250" key="1"/>
<evidence type="ECO:0000255" key="2">
    <source>
        <dbReference type="PROSITE-ProRule" id="PRU00047"/>
    </source>
</evidence>
<evidence type="ECO:0000255" key="3">
    <source>
        <dbReference type="PROSITE-ProRule" id="PRU00723"/>
    </source>
</evidence>
<evidence type="ECO:0000256" key="4">
    <source>
        <dbReference type="SAM" id="MobiDB-lite"/>
    </source>
</evidence>
<evidence type="ECO:0000305" key="5"/>
<sequence>MNAPLTLHRSGAGPSSYSSHRPLITQQRLVGASSSIPSQFIHNEFSFEQYIKDHLNVKLDNDAQICPDYSERLQCPRGASCPRRHVRPSHLNFLPAGSTALRDPNKRTVCKHWLRGLCKKDDQCDYLHEYDMRRIPECRFYATFGFCNSGDDCLYLHVDPAIKRRECERYNRGFCPKGPLCTKKHVRRVACPLYLAGFCPEGLDCPRGHVKSTPASSASRSNSPIQTHRPLTAAEAFGTGTGRGDEYGDGAGMRNQRAPAGRYGLPSGGAAGGAGAADIGASRGGMGYANNMQRRPNNVFGAPAQGAQEGGRGWRKDLSEVLCFKCGEMGHFANMCPNPALPGNRGGVERGPGGQARQARDRPRPY</sequence>
<accession>Q4P384</accession>
<accession>A0A0D1DV56</accession>